<organism>
    <name type="scientific">Sus scrofa</name>
    <name type="common">Pig</name>
    <dbReference type="NCBI Taxonomy" id="9823"/>
    <lineage>
        <taxon>Eukaryota</taxon>
        <taxon>Metazoa</taxon>
        <taxon>Chordata</taxon>
        <taxon>Craniata</taxon>
        <taxon>Vertebrata</taxon>
        <taxon>Euteleostomi</taxon>
        <taxon>Mammalia</taxon>
        <taxon>Eutheria</taxon>
        <taxon>Laurasiatheria</taxon>
        <taxon>Artiodactyla</taxon>
        <taxon>Suina</taxon>
        <taxon>Suidae</taxon>
        <taxon>Sus</taxon>
    </lineage>
</organism>
<keyword id="KW-1185">Reference proteome</keyword>
<gene>
    <name type="primary">SMPX</name>
</gene>
<proteinExistence type="evidence at transcript level"/>
<name>SMPX_PIG</name>
<evidence type="ECO:0000250" key="1"/>
<evidence type="ECO:0000256" key="2">
    <source>
        <dbReference type="SAM" id="MobiDB-lite"/>
    </source>
</evidence>
<evidence type="ECO:0000269" key="3">
    <source ref="1"/>
</evidence>
<evidence type="ECO:0000305" key="4"/>
<comment type="function">
    <text evidence="1">Plays a role in the regulatory network through which muscle cells coordinate their structural and functional states during growth, adaptation, and repair.</text>
</comment>
<comment type="tissue specificity">
    <text evidence="3">High level of expression found in the heart and skeletal muscle, a very low expression in the lung and spleen and no expression found in the liver, kidney, fat and brain.</text>
</comment>
<comment type="developmental stage">
    <text evidence="3">Shows a differential expression level in the skeletal muscle, the expression in 65-day embryos being higher than other stages.</text>
</comment>
<comment type="similarity">
    <text evidence="4">Belongs to the SMPX family.</text>
</comment>
<dbReference type="EMBL" id="DQ104414">
    <property type="protein sequence ID" value="AAZ80045.1"/>
    <property type="molecule type" value="mRNA"/>
</dbReference>
<dbReference type="EMBL" id="DQ845243">
    <property type="protein sequence ID" value="ABH10081.1"/>
    <property type="molecule type" value="mRNA"/>
</dbReference>
<dbReference type="RefSeq" id="NP_001072155.1">
    <property type="nucleotide sequence ID" value="NM_001078687.2"/>
</dbReference>
<dbReference type="RefSeq" id="XP_013847567.1">
    <property type="nucleotide sequence ID" value="XM_013992113.1"/>
</dbReference>
<dbReference type="FunCoup" id="Q0MUU2">
    <property type="interactions" value="173"/>
</dbReference>
<dbReference type="STRING" id="9823.ENSSSCP00000046859"/>
<dbReference type="PaxDb" id="9823-ENSSSCP00000024817"/>
<dbReference type="PeptideAtlas" id="Q0MUU2"/>
<dbReference type="Ensembl" id="ENSSSCT00070046443.1">
    <property type="protein sequence ID" value="ENSSSCP00070039184.1"/>
    <property type="gene ID" value="ENSSSCG00070023290.1"/>
</dbReference>
<dbReference type="GeneID" id="780438"/>
<dbReference type="KEGG" id="ssc:780438"/>
<dbReference type="CTD" id="23676"/>
<dbReference type="eggNOG" id="ENOG502S62J">
    <property type="taxonomic scope" value="Eukaryota"/>
</dbReference>
<dbReference type="HOGENOM" id="CLU_2512070_0_0_1"/>
<dbReference type="InParanoid" id="Q0MUU2"/>
<dbReference type="OMA" id="PPRKKEC"/>
<dbReference type="OrthoDB" id="8868927at2759"/>
<dbReference type="TreeFam" id="TF338181"/>
<dbReference type="Proteomes" id="UP000008227">
    <property type="component" value="Unplaced"/>
</dbReference>
<dbReference type="Proteomes" id="UP000314985">
    <property type="component" value="Unassembled WGS sequence"/>
</dbReference>
<dbReference type="Proteomes" id="UP000694570">
    <property type="component" value="Unplaced"/>
</dbReference>
<dbReference type="Proteomes" id="UP000694571">
    <property type="component" value="Unplaced"/>
</dbReference>
<dbReference type="Proteomes" id="UP000694720">
    <property type="component" value="Unplaced"/>
</dbReference>
<dbReference type="Proteomes" id="UP000694722">
    <property type="component" value="Unplaced"/>
</dbReference>
<dbReference type="Proteomes" id="UP000694723">
    <property type="component" value="Unplaced"/>
</dbReference>
<dbReference type="Proteomes" id="UP000694724">
    <property type="component" value="Unplaced"/>
</dbReference>
<dbReference type="Proteomes" id="UP000694725">
    <property type="component" value="Unplaced"/>
</dbReference>
<dbReference type="Proteomes" id="UP000694726">
    <property type="component" value="Unplaced"/>
</dbReference>
<dbReference type="Proteomes" id="UP000694727">
    <property type="component" value="Unplaced"/>
</dbReference>
<dbReference type="Proteomes" id="UP000694728">
    <property type="component" value="Unplaced"/>
</dbReference>
<dbReference type="GO" id="GO:0043034">
    <property type="term" value="C:costamere"/>
    <property type="evidence" value="ECO:0000318"/>
    <property type="project" value="GO_Central"/>
</dbReference>
<dbReference type="GO" id="GO:0031430">
    <property type="term" value="C:M band"/>
    <property type="evidence" value="ECO:0000318"/>
    <property type="project" value="GO_Central"/>
</dbReference>
<dbReference type="GO" id="GO:0005927">
    <property type="term" value="C:muscle tendon junction"/>
    <property type="evidence" value="ECO:0000318"/>
    <property type="project" value="GO_Central"/>
</dbReference>
<dbReference type="InterPro" id="IPR029268">
    <property type="entry name" value="Chisel"/>
</dbReference>
<dbReference type="PANTHER" id="PTHR17416">
    <property type="entry name" value="SMALL MUSCULAR PROTEIN"/>
    <property type="match status" value="1"/>
</dbReference>
<dbReference type="PANTHER" id="PTHR17416:SF0">
    <property type="entry name" value="SMALL MUSCULAR PROTEIN"/>
    <property type="match status" value="1"/>
</dbReference>
<dbReference type="Pfam" id="PF15355">
    <property type="entry name" value="Chisel"/>
    <property type="match status" value="1"/>
</dbReference>
<protein>
    <recommendedName>
        <fullName>Small muscular protein</fullName>
    </recommendedName>
</protein>
<reference key="1">
    <citation type="journal article" date="2006" name="Asian-Australas. J. Anim. Sci.">
        <title>Sequence characterization, expression profile, chromosomal localization and polymorphism of the porcine SMPX gene.</title>
        <authorList>
            <person name="Guan H.P."/>
            <person name="Fan B."/>
            <person name="Li K."/>
            <person name="Zhu M.J."/>
            <person name="Yerle M."/>
            <person name="Liu B."/>
        </authorList>
    </citation>
    <scope>NUCLEOTIDE SEQUENCE [MRNA]</scope>
    <scope>TISSUE SPECIFICITY</scope>
    <scope>DEVELOPMENTAL STAGE</scope>
</reference>
<reference key="2">
    <citation type="submission" date="2006-07" db="EMBL/GenBank/DDBJ databases">
        <title>cDNA cloning and identification of a differentially expressed gene porcine SMPX between F1 crossbreds and their parents.</title>
        <authorList>
            <person name="Ren Z.Q."/>
            <person name="Xiong Y.Z."/>
        </authorList>
    </citation>
    <scope>NUCLEOTIDE SEQUENCE [MRNA]</scope>
</reference>
<feature type="chain" id="PRO_0000378198" description="Small muscular protein">
    <location>
        <begin position="1"/>
        <end position="86"/>
    </location>
</feature>
<feature type="region of interest" description="Disordered" evidence="2">
    <location>
        <begin position="20"/>
        <end position="64"/>
    </location>
</feature>
<sequence>MSKQPVSNVRAIQANINIPMGAFRPGAGQPPRKKECTPETEEAVLPTSDEEKKPIPGAKKLPGPAVNLSEIQNIKSELKYVPRAEQ</sequence>
<accession>Q0MUU2</accession>